<dbReference type="EMBL" id="CP000423">
    <property type="protein sequence ID" value="ABJ71237.1"/>
    <property type="molecule type" value="Genomic_DNA"/>
</dbReference>
<dbReference type="RefSeq" id="WP_003567562.1">
    <property type="nucleotide sequence ID" value="NC_008526.1"/>
</dbReference>
<dbReference type="RefSeq" id="YP_807679.1">
    <property type="nucleotide sequence ID" value="NC_008526.1"/>
</dbReference>
<dbReference type="SMR" id="Q034Y5"/>
<dbReference type="STRING" id="321967.LSEI_2501"/>
<dbReference type="PaxDb" id="321967-LSEI_2501"/>
<dbReference type="GeneID" id="57091080"/>
<dbReference type="KEGG" id="lca:LSEI_2501"/>
<dbReference type="PATRIC" id="fig|321967.11.peg.2455"/>
<dbReference type="HOGENOM" id="CLU_037562_3_2_9"/>
<dbReference type="Proteomes" id="UP000001651">
    <property type="component" value="Chromosome"/>
</dbReference>
<dbReference type="GO" id="GO:1990904">
    <property type="term" value="C:ribonucleoprotein complex"/>
    <property type="evidence" value="ECO:0007669"/>
    <property type="project" value="UniProtKB-KW"/>
</dbReference>
<dbReference type="GO" id="GO:0005840">
    <property type="term" value="C:ribosome"/>
    <property type="evidence" value="ECO:0007669"/>
    <property type="project" value="UniProtKB-KW"/>
</dbReference>
<dbReference type="GO" id="GO:0019843">
    <property type="term" value="F:rRNA binding"/>
    <property type="evidence" value="ECO:0007669"/>
    <property type="project" value="UniProtKB-UniRule"/>
</dbReference>
<dbReference type="GO" id="GO:0003735">
    <property type="term" value="F:structural constituent of ribosome"/>
    <property type="evidence" value="ECO:0007669"/>
    <property type="project" value="InterPro"/>
</dbReference>
<dbReference type="GO" id="GO:0006412">
    <property type="term" value="P:translation"/>
    <property type="evidence" value="ECO:0007669"/>
    <property type="project" value="UniProtKB-UniRule"/>
</dbReference>
<dbReference type="FunFam" id="3.30.70.330:FF:000001">
    <property type="entry name" value="50S ribosomal protein L23"/>
    <property type="match status" value="1"/>
</dbReference>
<dbReference type="Gene3D" id="3.30.70.330">
    <property type="match status" value="1"/>
</dbReference>
<dbReference type="HAMAP" id="MF_01369_B">
    <property type="entry name" value="Ribosomal_uL23_B"/>
    <property type="match status" value="1"/>
</dbReference>
<dbReference type="InterPro" id="IPR012677">
    <property type="entry name" value="Nucleotide-bd_a/b_plait_sf"/>
</dbReference>
<dbReference type="InterPro" id="IPR013025">
    <property type="entry name" value="Ribosomal_uL23-like"/>
</dbReference>
<dbReference type="InterPro" id="IPR012678">
    <property type="entry name" value="Ribosomal_uL23/eL15/eS24_sf"/>
</dbReference>
<dbReference type="NCBIfam" id="NF004363">
    <property type="entry name" value="PRK05738.2-4"/>
    <property type="match status" value="1"/>
</dbReference>
<dbReference type="PANTHER" id="PTHR11620">
    <property type="entry name" value="60S RIBOSOMAL PROTEIN L23A"/>
    <property type="match status" value="1"/>
</dbReference>
<dbReference type="Pfam" id="PF00276">
    <property type="entry name" value="Ribosomal_L23"/>
    <property type="match status" value="1"/>
</dbReference>
<dbReference type="SUPFAM" id="SSF54189">
    <property type="entry name" value="Ribosomal proteins S24e, L23 and L15e"/>
    <property type="match status" value="1"/>
</dbReference>
<feature type="chain" id="PRO_1000068089" description="Large ribosomal subunit protein uL23">
    <location>
        <begin position="1"/>
        <end position="100"/>
    </location>
</feature>
<comment type="function">
    <text evidence="1">One of the early assembly proteins it binds 23S rRNA. One of the proteins that surrounds the polypeptide exit tunnel on the outside of the ribosome. Forms the main docking site for trigger factor binding to the ribosome.</text>
</comment>
<comment type="subunit">
    <text evidence="1">Part of the 50S ribosomal subunit. Contacts protein L29, and trigger factor when it is bound to the ribosome.</text>
</comment>
<comment type="similarity">
    <text evidence="1">Belongs to the universal ribosomal protein uL23 family.</text>
</comment>
<organism>
    <name type="scientific">Lacticaseibacillus paracasei (strain ATCC 334 / BCRC 17002 / CCUG 31169 / CIP 107868 / KCTC 3260 / NRRL B-441)</name>
    <name type="common">Lactobacillus paracasei</name>
    <dbReference type="NCBI Taxonomy" id="321967"/>
    <lineage>
        <taxon>Bacteria</taxon>
        <taxon>Bacillati</taxon>
        <taxon>Bacillota</taxon>
        <taxon>Bacilli</taxon>
        <taxon>Lactobacillales</taxon>
        <taxon>Lactobacillaceae</taxon>
        <taxon>Lacticaseibacillus</taxon>
    </lineage>
</organism>
<accession>Q034Y5</accession>
<gene>
    <name evidence="1" type="primary">rplW</name>
    <name type="ordered locus">LSEI_2501</name>
</gene>
<keyword id="KW-1185">Reference proteome</keyword>
<keyword id="KW-0687">Ribonucleoprotein</keyword>
<keyword id="KW-0689">Ribosomal protein</keyword>
<keyword id="KW-0694">RNA-binding</keyword>
<keyword id="KW-0699">rRNA-binding</keyword>
<evidence type="ECO:0000255" key="1">
    <source>
        <dbReference type="HAMAP-Rule" id="MF_01369"/>
    </source>
</evidence>
<evidence type="ECO:0000305" key="2"/>
<proteinExistence type="inferred from homology"/>
<reference key="1">
    <citation type="journal article" date="2006" name="Proc. Natl. Acad. Sci. U.S.A.">
        <title>Comparative genomics of the lactic acid bacteria.</title>
        <authorList>
            <person name="Makarova K.S."/>
            <person name="Slesarev A."/>
            <person name="Wolf Y.I."/>
            <person name="Sorokin A."/>
            <person name="Mirkin B."/>
            <person name="Koonin E.V."/>
            <person name="Pavlov A."/>
            <person name="Pavlova N."/>
            <person name="Karamychev V."/>
            <person name="Polouchine N."/>
            <person name="Shakhova V."/>
            <person name="Grigoriev I."/>
            <person name="Lou Y."/>
            <person name="Rohksar D."/>
            <person name="Lucas S."/>
            <person name="Huang K."/>
            <person name="Goodstein D.M."/>
            <person name="Hawkins T."/>
            <person name="Plengvidhya V."/>
            <person name="Welker D."/>
            <person name="Hughes J."/>
            <person name="Goh Y."/>
            <person name="Benson A."/>
            <person name="Baldwin K."/>
            <person name="Lee J.-H."/>
            <person name="Diaz-Muniz I."/>
            <person name="Dosti B."/>
            <person name="Smeianov V."/>
            <person name="Wechter W."/>
            <person name="Barabote R."/>
            <person name="Lorca G."/>
            <person name="Altermann E."/>
            <person name="Barrangou R."/>
            <person name="Ganesan B."/>
            <person name="Xie Y."/>
            <person name="Rawsthorne H."/>
            <person name="Tamir D."/>
            <person name="Parker C."/>
            <person name="Breidt F."/>
            <person name="Broadbent J.R."/>
            <person name="Hutkins R."/>
            <person name="O'Sullivan D."/>
            <person name="Steele J."/>
            <person name="Unlu G."/>
            <person name="Saier M.H. Jr."/>
            <person name="Klaenhammer T."/>
            <person name="Richardson P."/>
            <person name="Kozyavkin S."/>
            <person name="Weimer B.C."/>
            <person name="Mills D.A."/>
        </authorList>
    </citation>
    <scope>NUCLEOTIDE SEQUENCE [LARGE SCALE GENOMIC DNA]</scope>
    <source>
        <strain>ATCC 334 / BCRC 17002 / CCUG 31169 / CIP 107868 / KCTC 3260 / NRRL B-441</strain>
    </source>
</reference>
<protein>
    <recommendedName>
        <fullName evidence="1">Large ribosomal subunit protein uL23</fullName>
    </recommendedName>
    <alternativeName>
        <fullName evidence="2">50S ribosomal protein L23</fullName>
    </alternativeName>
</protein>
<name>RL23_LACP3</name>
<sequence length="100" mass="11560">MEARDIILRPIVTEQSMAEMDNRKYTFEVALHATKPQVRKAVEEIFGVKVVNVNIANVRGKKKRQGRYEGMTRRRRKALIALSADSKEIKIFADEDNDKK</sequence>